<protein>
    <recommendedName>
        <fullName>Bax inhibitor 1</fullName>
        <shortName>BI-1</shortName>
    </recommendedName>
    <alternativeName>
        <fullName>Testis-enhanced gene transcript protein</fullName>
    </alternativeName>
    <alternativeName>
        <fullName>Transmembrane BAX inhibitor motif-containing protein 6</fullName>
    </alternativeName>
</protein>
<organism>
    <name type="scientific">Sus scrofa</name>
    <name type="common">Pig</name>
    <dbReference type="NCBI Taxonomy" id="9823"/>
    <lineage>
        <taxon>Eukaryota</taxon>
        <taxon>Metazoa</taxon>
        <taxon>Chordata</taxon>
        <taxon>Craniata</taxon>
        <taxon>Vertebrata</taxon>
        <taxon>Euteleostomi</taxon>
        <taxon>Mammalia</taxon>
        <taxon>Eutheria</taxon>
        <taxon>Laurasiatheria</taxon>
        <taxon>Artiodactyla</taxon>
        <taxon>Suina</taxon>
        <taxon>Suidae</taxon>
        <taxon>Sus</taxon>
    </lineage>
</organism>
<evidence type="ECO:0000250" key="1">
    <source>
        <dbReference type="UniProtKB" id="P55061"/>
    </source>
</evidence>
<evidence type="ECO:0000250" key="2">
    <source>
        <dbReference type="UniProtKB" id="Q9D2C7"/>
    </source>
</evidence>
<evidence type="ECO:0000255" key="3"/>
<evidence type="ECO:0000305" key="4"/>
<dbReference type="EMBL" id="AY713975">
    <property type="protein sequence ID" value="AAU05320.1"/>
    <property type="molecule type" value="mRNA"/>
</dbReference>
<dbReference type="RefSeq" id="NP_001005348.1">
    <property type="nucleotide sequence ID" value="NM_001005348.1"/>
</dbReference>
<dbReference type="SMR" id="Q66RM2"/>
<dbReference type="FunCoup" id="Q66RM2">
    <property type="interactions" value="619"/>
</dbReference>
<dbReference type="STRING" id="9823.ENSSSCP00000041302"/>
<dbReference type="PaxDb" id="9823-ENSSSCP00000026427"/>
<dbReference type="PeptideAtlas" id="Q66RM2"/>
<dbReference type="GeneID" id="396907"/>
<dbReference type="KEGG" id="ssc:396907"/>
<dbReference type="CTD" id="7009"/>
<dbReference type="eggNOG" id="KOG1629">
    <property type="taxonomic scope" value="Eukaryota"/>
</dbReference>
<dbReference type="InParanoid" id="Q66RM2"/>
<dbReference type="OrthoDB" id="1277691at2759"/>
<dbReference type="Proteomes" id="UP000008227">
    <property type="component" value="Unplaced"/>
</dbReference>
<dbReference type="Proteomes" id="UP000314985">
    <property type="component" value="Unplaced"/>
</dbReference>
<dbReference type="Proteomes" id="UP000694570">
    <property type="component" value="Unplaced"/>
</dbReference>
<dbReference type="Proteomes" id="UP000694571">
    <property type="component" value="Unplaced"/>
</dbReference>
<dbReference type="Proteomes" id="UP000694720">
    <property type="component" value="Unplaced"/>
</dbReference>
<dbReference type="Proteomes" id="UP000694722">
    <property type="component" value="Unplaced"/>
</dbReference>
<dbReference type="Proteomes" id="UP000694723">
    <property type="component" value="Unplaced"/>
</dbReference>
<dbReference type="Proteomes" id="UP000694724">
    <property type="component" value="Unplaced"/>
</dbReference>
<dbReference type="Proteomes" id="UP000694725">
    <property type="component" value="Unplaced"/>
</dbReference>
<dbReference type="Proteomes" id="UP000694726">
    <property type="component" value="Unplaced"/>
</dbReference>
<dbReference type="Proteomes" id="UP000694727">
    <property type="component" value="Unplaced"/>
</dbReference>
<dbReference type="Proteomes" id="UP000694728">
    <property type="component" value="Unplaced"/>
</dbReference>
<dbReference type="GO" id="GO:0005789">
    <property type="term" value="C:endoplasmic reticulum membrane"/>
    <property type="evidence" value="ECO:0000318"/>
    <property type="project" value="GO_Central"/>
</dbReference>
<dbReference type="GO" id="GO:0005262">
    <property type="term" value="F:calcium channel activity"/>
    <property type="evidence" value="ECO:0000318"/>
    <property type="project" value="GO_Central"/>
</dbReference>
<dbReference type="GO" id="GO:0060698">
    <property type="term" value="F:endoribonuclease inhibitor activity"/>
    <property type="evidence" value="ECO:0000318"/>
    <property type="project" value="GO_Central"/>
</dbReference>
<dbReference type="GO" id="GO:0006915">
    <property type="term" value="P:apoptotic process"/>
    <property type="evidence" value="ECO:0007669"/>
    <property type="project" value="UniProtKB-KW"/>
</dbReference>
<dbReference type="GO" id="GO:0006914">
    <property type="term" value="P:autophagy"/>
    <property type="evidence" value="ECO:0007669"/>
    <property type="project" value="UniProtKB-KW"/>
</dbReference>
<dbReference type="GO" id="GO:0034620">
    <property type="term" value="P:cellular response to unfolded protein"/>
    <property type="evidence" value="ECO:0000318"/>
    <property type="project" value="GO_Central"/>
</dbReference>
<dbReference type="GO" id="GO:2001234">
    <property type="term" value="P:negative regulation of apoptotic signaling pathway"/>
    <property type="evidence" value="ECO:0000318"/>
    <property type="project" value="GO_Central"/>
</dbReference>
<dbReference type="CDD" id="cd10430">
    <property type="entry name" value="BI-1"/>
    <property type="match status" value="1"/>
</dbReference>
<dbReference type="InterPro" id="IPR006213">
    <property type="entry name" value="Bax_inhbtr1_CS"/>
</dbReference>
<dbReference type="InterPro" id="IPR006214">
    <property type="entry name" value="Bax_inhibitor_1-related"/>
</dbReference>
<dbReference type="PANTHER" id="PTHR23291:SF32">
    <property type="entry name" value="BAX INHIBITOR 1"/>
    <property type="match status" value="1"/>
</dbReference>
<dbReference type="PANTHER" id="PTHR23291">
    <property type="entry name" value="BAX INHIBITOR-RELATED"/>
    <property type="match status" value="1"/>
</dbReference>
<dbReference type="Pfam" id="PF01027">
    <property type="entry name" value="Bax1-I"/>
    <property type="match status" value="1"/>
</dbReference>
<dbReference type="PROSITE" id="PS01243">
    <property type="entry name" value="BI1"/>
    <property type="match status" value="1"/>
</dbReference>
<keyword id="KW-0053">Apoptosis</keyword>
<keyword id="KW-0072">Autophagy</keyword>
<keyword id="KW-0106">Calcium</keyword>
<keyword id="KW-0256">Endoplasmic reticulum</keyword>
<keyword id="KW-1017">Isopeptide bond</keyword>
<keyword id="KW-0472">Membrane</keyword>
<keyword id="KW-1185">Reference proteome</keyword>
<keyword id="KW-0812">Transmembrane</keyword>
<keyword id="KW-1133">Transmembrane helix</keyword>
<keyword id="KW-0832">Ubl conjugation</keyword>
<keyword id="KW-0834">Unfolded protein response</keyword>
<accession>Q66RM2</accession>
<sequence>MNIFDRKINFDALLKFSHITPSTQQHLKKVYASFALCMFVAAAGAYVHVVTRFIQAGLLSALGSLGLMIWLMATPHSHETEQKRLGLLAGFAFLTGVGLGPALDLCIAINPSILPTAFMGTAMIFTCFTLSALYARRRSYLFLGGILMSAMSLMVLSSLGNLFFGSIWLFQANLYVGLVVMCGFVLFDTQLIIEKAENGDKDYIWHCVDLFSDFVTLFRKLMMILAMNEKDKKKEKK</sequence>
<name>BI1_PIG</name>
<proteinExistence type="evidence at transcript level"/>
<reference key="1">
    <citation type="submission" date="2004-08" db="EMBL/GenBank/DDBJ databases">
        <title>Eukaryotic homologs of Bax inhibitor-1 (BI-1) suppresses Bax- and hydrogen peroxide-induced cell death in endothelial cell lines.</title>
        <authorList>
            <person name="Kim J.-Y."/>
            <person name="Kim J.-H."/>
            <person name="Jeong M.-Y."/>
            <person name="Cho S.-G."/>
        </authorList>
    </citation>
    <scope>NUCLEOTIDE SEQUENCE [MRNA]</scope>
</reference>
<gene>
    <name type="primary">TMBIM6</name>
    <name type="synonym">TEGT</name>
</gene>
<feature type="chain" id="PRO_0000179080" description="Bax inhibitor 1">
    <location>
        <begin position="1"/>
        <end position="237"/>
    </location>
</feature>
<feature type="topological domain" description="Cytoplasmic" evidence="3">
    <location>
        <begin position="1"/>
        <end position="29"/>
    </location>
</feature>
<feature type="transmembrane region" description="Helical" evidence="3">
    <location>
        <begin position="30"/>
        <end position="50"/>
    </location>
</feature>
<feature type="topological domain" description="Lumenal" evidence="3">
    <location>
        <begin position="51"/>
        <end position="52"/>
    </location>
</feature>
<feature type="transmembrane region" description="Helical" evidence="3">
    <location>
        <begin position="53"/>
        <end position="73"/>
    </location>
</feature>
<feature type="topological domain" description="Cytoplasmic" evidence="3">
    <location>
        <begin position="74"/>
        <end position="86"/>
    </location>
</feature>
<feature type="transmembrane region" description="Helical" evidence="3">
    <location>
        <begin position="87"/>
        <end position="107"/>
    </location>
</feature>
<feature type="topological domain" description="Lumenal" evidence="3">
    <location>
        <begin position="108"/>
        <end position="112"/>
    </location>
</feature>
<feature type="transmembrane region" description="Helical" evidence="3">
    <location>
        <begin position="113"/>
        <end position="133"/>
    </location>
</feature>
<feature type="topological domain" description="Cytoplasmic" evidence="3">
    <location>
        <begin position="134"/>
        <end position="139"/>
    </location>
</feature>
<feature type="transmembrane region" description="Helical" evidence="3">
    <location>
        <begin position="140"/>
        <end position="160"/>
    </location>
</feature>
<feature type="topological domain" description="Lumenal" evidence="3">
    <location>
        <begin position="161"/>
        <end position="166"/>
    </location>
</feature>
<feature type="transmembrane region" description="Helical" evidence="3">
    <location>
        <begin position="167"/>
        <end position="187"/>
    </location>
</feature>
<feature type="topological domain" description="Cytoplasmic" evidence="3">
    <location>
        <begin position="188"/>
        <end position="206"/>
    </location>
</feature>
<feature type="intramembrane region" description="Helical" evidence="3">
    <location>
        <begin position="207"/>
        <end position="227"/>
    </location>
</feature>
<feature type="topological domain" description="Cytoplasmic" evidence="3">
    <location>
        <begin position="228"/>
        <end position="237"/>
    </location>
</feature>
<feature type="cross-link" description="Glycyl lysine isopeptide (Lys-Gly) (interchain with G-Cter in ubiquitin)" evidence="1">
    <location>
        <position position="7"/>
    </location>
</feature>
<comment type="function">
    <text evidence="1 2">Endoplasmic reticulum (ER)-resident protein that confers cellular protection as an anti-apoptotic protein by limiting multiple stress-inducing pathways surrounding the endoplasmic reticulum and mitochondria. Inhibits the activities of the key sensor for the endoplasmic reticulum unfolded protein response IRE1alpha/ERN1 both directly and by blocking BAX/BAK binding. Modulates ER calcium homeostasis by acting as a calcium-leak channel (By similarity). Negatively regulates autophagy and autophagosome formation, especially during periods of nutrient deprivation, and reduces cell survival during starvation (By similarity).</text>
</comment>
<comment type="subunit">
    <text evidence="1">Interacts with BCL2 and BCL2L1. Interacts with ERN1.</text>
</comment>
<comment type="subcellular location">
    <subcellularLocation>
        <location evidence="1">Endoplasmic reticulum membrane</location>
        <topology evidence="1">Multi-pass membrane protein</topology>
    </subcellularLocation>
</comment>
<comment type="domain">
    <text evidence="1">The intra-membrane loop at the C-terminus acts as a calcium pore, mediating calcium leak from the ER into the cytosol.</text>
</comment>
<comment type="PTM">
    <text evidence="1">Ubiquitinated by BFAR, leading to proteasomal degradation.</text>
</comment>
<comment type="similarity">
    <text evidence="4">Belongs to the BI1 family.</text>
</comment>